<evidence type="ECO:0000250" key="1"/>
<evidence type="ECO:0000269" key="2">
    <source>
    </source>
</evidence>
<evidence type="ECO:0000305" key="3"/>
<comment type="function">
    <text evidence="1">Adapter protein implicated in the regulation of a large spectrum of both general and specialized signaling pathways. Binds to a large number of partners, usually by recognition of a phosphoserine or phosphothreonine motif. Binding generally results in the modulation of the activity of the binding partner (By similarity).</text>
</comment>
<comment type="subunit">
    <text evidence="1">Homodimer, and heterodimer with other family members.</text>
</comment>
<comment type="subcellular location">
    <subcellularLocation>
        <location evidence="1">Cytoplasm</location>
    </subcellularLocation>
</comment>
<comment type="tissue specificity">
    <text evidence="2">Expressed in brain, gill, heart, intestine, kidney, liver, ovary, skin, spleen and testis.</text>
</comment>
<comment type="developmental stage">
    <text evidence="2">Expressed throughout development. Expressed in the neural crest, eyes, yolk syncytium, tail bud and caudal somites of somitic embryos. Expressed in the neural crest, gill covers and gill arches, and the pectoral fins of post-somitic embryos.</text>
</comment>
<comment type="induction">
    <text evidence="2">Repressed under stress conditions such as netting.</text>
</comment>
<comment type="similarity">
    <text evidence="3">Belongs to the 14-3-3 family.</text>
</comment>
<keyword id="KW-0007">Acetylation</keyword>
<keyword id="KW-0963">Cytoplasm</keyword>
<feature type="chain" id="PRO_0000058603" description="14-3-3 protein beta/alpha-1">
    <location>
        <begin position="1"/>
        <end position="244"/>
    </location>
</feature>
<feature type="site" description="Interaction with phosphoserine on interacting protein" evidence="1">
    <location>
        <position position="56"/>
    </location>
</feature>
<feature type="site" description="Interaction with phosphoserine on interacting protein" evidence="1">
    <location>
        <position position="127"/>
    </location>
</feature>
<feature type="modified residue" description="N-acetylmethionine" evidence="1">
    <location>
        <position position="1"/>
    </location>
</feature>
<organism>
    <name type="scientific">Oncorhynchus mykiss</name>
    <name type="common">Rainbow trout</name>
    <name type="synonym">Salmo gairdneri</name>
    <dbReference type="NCBI Taxonomy" id="8022"/>
    <lineage>
        <taxon>Eukaryota</taxon>
        <taxon>Metazoa</taxon>
        <taxon>Chordata</taxon>
        <taxon>Craniata</taxon>
        <taxon>Vertebrata</taxon>
        <taxon>Euteleostomi</taxon>
        <taxon>Actinopterygii</taxon>
        <taxon>Neopterygii</taxon>
        <taxon>Teleostei</taxon>
        <taxon>Protacanthopterygii</taxon>
        <taxon>Salmoniformes</taxon>
        <taxon>Salmonidae</taxon>
        <taxon>Salmoninae</taxon>
        <taxon>Oncorhynchus</taxon>
    </lineage>
</organism>
<sequence>MDKNDLVQKAKLAEQAERYDDMAAAMKAVTEQGGELSNEERNLLSVAYKNVVGARRSSWRVISSIEQKTEGNEKKQQMAREYREKIEAELQDICKDVLALLDNYLIANATQAESKVFYLKMKGDYYRYLSEVASGDSKKTTVENSQQAYQEAFDISKKDMQPTHPIRLGLALNFSVFYYEILNSPEQACSLAKAAFDEAIAELDTLNEDSYKDSTLIMQLLRDNLTLWTSENQGDEGDAGEGEN</sequence>
<reference key="1">
    <citation type="journal article" date="2004" name="J. Exp. Biol.">
        <title>The 14-3-3 proteins in the teleost fish rainbow trout (Oncorhynchus mykiss).</title>
        <authorList>
            <person name="Koskinen H."/>
            <person name="Krasnov A."/>
            <person name="Rexroad C."/>
            <person name="Gorodilov Y."/>
            <person name="Afanasyev S."/>
            <person name="Moelsae H."/>
        </authorList>
    </citation>
    <scope>NUCLEOTIDE SEQUENCE [MRNA]</scope>
    <scope>TISSUE SPECIFICITY</scope>
    <scope>DEVELOPMENTAL STAGE</scope>
    <scope>INDUCTION</scope>
</reference>
<protein>
    <recommendedName>
        <fullName>14-3-3 protein beta/alpha-1</fullName>
        <shortName>Protein 14-3-3B1</shortName>
    </recommendedName>
</protein>
<name>143B1_ONCMY</name>
<proteinExistence type="evidence at transcript level"/>
<accession>Q6UFZ9</accession>
<dbReference type="EMBL" id="AY370879">
    <property type="protein sequence ID" value="AAQ72487.1"/>
    <property type="molecule type" value="mRNA"/>
</dbReference>
<dbReference type="RefSeq" id="NP_001117940.1">
    <property type="nucleotide sequence ID" value="NM_001124468.1"/>
</dbReference>
<dbReference type="SMR" id="Q6UFZ9"/>
<dbReference type="Ensembl" id="ENSOMYT00000023898.2">
    <property type="protein sequence ID" value="ENSOMYP00000021796.1"/>
    <property type="gene ID" value="ENSOMYG00000010450.2"/>
</dbReference>
<dbReference type="GeneID" id="100136192"/>
<dbReference type="KEGG" id="omy:100136192"/>
<dbReference type="CTD" id="323055"/>
<dbReference type="GeneTree" id="ENSGT01090000260040"/>
<dbReference type="OrthoDB" id="10260625at2759"/>
<dbReference type="Proteomes" id="UP000694395">
    <property type="component" value="Chromosome 7"/>
</dbReference>
<dbReference type="GO" id="GO:0005737">
    <property type="term" value="C:cytoplasm"/>
    <property type="evidence" value="ECO:0007669"/>
    <property type="project" value="UniProtKB-SubCell"/>
</dbReference>
<dbReference type="FunFam" id="1.20.190.20:FF:000001">
    <property type="entry name" value="14-3-3 gamma 1"/>
    <property type="match status" value="1"/>
</dbReference>
<dbReference type="Gene3D" id="1.20.190.20">
    <property type="entry name" value="14-3-3 domain"/>
    <property type="match status" value="1"/>
</dbReference>
<dbReference type="InterPro" id="IPR000308">
    <property type="entry name" value="14-3-3"/>
</dbReference>
<dbReference type="InterPro" id="IPR023409">
    <property type="entry name" value="14-3-3_CS"/>
</dbReference>
<dbReference type="InterPro" id="IPR036815">
    <property type="entry name" value="14-3-3_dom_sf"/>
</dbReference>
<dbReference type="InterPro" id="IPR023410">
    <property type="entry name" value="14-3-3_domain"/>
</dbReference>
<dbReference type="PANTHER" id="PTHR18860">
    <property type="entry name" value="14-3-3 PROTEIN"/>
    <property type="match status" value="1"/>
</dbReference>
<dbReference type="Pfam" id="PF00244">
    <property type="entry name" value="14-3-3"/>
    <property type="match status" value="1"/>
</dbReference>
<dbReference type="PIRSF" id="PIRSF000868">
    <property type="entry name" value="14-3-3"/>
    <property type="match status" value="1"/>
</dbReference>
<dbReference type="PRINTS" id="PR00305">
    <property type="entry name" value="1433ZETA"/>
</dbReference>
<dbReference type="SMART" id="SM00101">
    <property type="entry name" value="14_3_3"/>
    <property type="match status" value="1"/>
</dbReference>
<dbReference type="SUPFAM" id="SSF48445">
    <property type="entry name" value="14-3-3 protein"/>
    <property type="match status" value="1"/>
</dbReference>
<dbReference type="PROSITE" id="PS00796">
    <property type="entry name" value="1433_1"/>
    <property type="match status" value="1"/>
</dbReference>
<dbReference type="PROSITE" id="PS00797">
    <property type="entry name" value="1433_2"/>
    <property type="match status" value="1"/>
</dbReference>